<dbReference type="EC" id="6.1.1.4" evidence="1"/>
<dbReference type="EMBL" id="CP000860">
    <property type="protein sequence ID" value="ACA60358.1"/>
    <property type="molecule type" value="Genomic_DNA"/>
</dbReference>
<dbReference type="RefSeq" id="WP_012302934.1">
    <property type="nucleotide sequence ID" value="NC_010424.1"/>
</dbReference>
<dbReference type="SMR" id="B1I5R7"/>
<dbReference type="STRING" id="477974.Daud_1865"/>
<dbReference type="KEGG" id="dau:Daud_1865"/>
<dbReference type="eggNOG" id="COG0495">
    <property type="taxonomic scope" value="Bacteria"/>
</dbReference>
<dbReference type="HOGENOM" id="CLU_004427_0_0_9"/>
<dbReference type="OrthoDB" id="9810365at2"/>
<dbReference type="Proteomes" id="UP000008544">
    <property type="component" value="Chromosome"/>
</dbReference>
<dbReference type="GO" id="GO:0005829">
    <property type="term" value="C:cytosol"/>
    <property type="evidence" value="ECO:0007669"/>
    <property type="project" value="TreeGrafter"/>
</dbReference>
<dbReference type="GO" id="GO:0002161">
    <property type="term" value="F:aminoacyl-tRNA deacylase activity"/>
    <property type="evidence" value="ECO:0007669"/>
    <property type="project" value="InterPro"/>
</dbReference>
<dbReference type="GO" id="GO:0005524">
    <property type="term" value="F:ATP binding"/>
    <property type="evidence" value="ECO:0007669"/>
    <property type="project" value="UniProtKB-UniRule"/>
</dbReference>
<dbReference type="GO" id="GO:0004823">
    <property type="term" value="F:leucine-tRNA ligase activity"/>
    <property type="evidence" value="ECO:0007669"/>
    <property type="project" value="UniProtKB-UniRule"/>
</dbReference>
<dbReference type="GO" id="GO:0006429">
    <property type="term" value="P:leucyl-tRNA aminoacylation"/>
    <property type="evidence" value="ECO:0007669"/>
    <property type="project" value="UniProtKB-UniRule"/>
</dbReference>
<dbReference type="CDD" id="cd07958">
    <property type="entry name" value="Anticodon_Ia_Leu_BEm"/>
    <property type="match status" value="1"/>
</dbReference>
<dbReference type="CDD" id="cd00812">
    <property type="entry name" value="LeuRS_core"/>
    <property type="match status" value="1"/>
</dbReference>
<dbReference type="FunFam" id="3.40.50.620:FF:000003">
    <property type="entry name" value="Leucine--tRNA ligase"/>
    <property type="match status" value="1"/>
</dbReference>
<dbReference type="FunFam" id="3.40.50.620:FF:000056">
    <property type="entry name" value="Leucine--tRNA ligase"/>
    <property type="match status" value="1"/>
</dbReference>
<dbReference type="FunFam" id="1.10.730.10:FF:000011">
    <property type="entry name" value="Leucine--tRNA ligase chloroplastic/mitochondrial"/>
    <property type="match status" value="1"/>
</dbReference>
<dbReference type="Gene3D" id="3.10.20.590">
    <property type="match status" value="1"/>
</dbReference>
<dbReference type="Gene3D" id="3.40.50.620">
    <property type="entry name" value="HUPs"/>
    <property type="match status" value="2"/>
</dbReference>
<dbReference type="Gene3D" id="1.10.730.10">
    <property type="entry name" value="Isoleucyl-tRNA Synthetase, Domain 1"/>
    <property type="match status" value="2"/>
</dbReference>
<dbReference type="HAMAP" id="MF_00049_B">
    <property type="entry name" value="Leu_tRNA_synth_B"/>
    <property type="match status" value="1"/>
</dbReference>
<dbReference type="InterPro" id="IPR001412">
    <property type="entry name" value="aa-tRNA-synth_I_CS"/>
</dbReference>
<dbReference type="InterPro" id="IPR002300">
    <property type="entry name" value="aa-tRNA-synth_Ia"/>
</dbReference>
<dbReference type="InterPro" id="IPR002302">
    <property type="entry name" value="Leu-tRNA-ligase"/>
</dbReference>
<dbReference type="InterPro" id="IPR025709">
    <property type="entry name" value="Leu_tRNA-synth_edit"/>
</dbReference>
<dbReference type="InterPro" id="IPR013155">
    <property type="entry name" value="M/V/L/I-tRNA-synth_anticd-bd"/>
</dbReference>
<dbReference type="InterPro" id="IPR015413">
    <property type="entry name" value="Methionyl/Leucyl_tRNA_Synth"/>
</dbReference>
<dbReference type="InterPro" id="IPR014729">
    <property type="entry name" value="Rossmann-like_a/b/a_fold"/>
</dbReference>
<dbReference type="InterPro" id="IPR009080">
    <property type="entry name" value="tRNAsynth_Ia_anticodon-bd"/>
</dbReference>
<dbReference type="InterPro" id="IPR009008">
    <property type="entry name" value="Val/Leu/Ile-tRNA-synth_edit"/>
</dbReference>
<dbReference type="NCBIfam" id="TIGR00396">
    <property type="entry name" value="leuS_bact"/>
    <property type="match status" value="1"/>
</dbReference>
<dbReference type="PANTHER" id="PTHR43740:SF2">
    <property type="entry name" value="LEUCINE--TRNA LIGASE, MITOCHONDRIAL"/>
    <property type="match status" value="1"/>
</dbReference>
<dbReference type="PANTHER" id="PTHR43740">
    <property type="entry name" value="LEUCYL-TRNA SYNTHETASE"/>
    <property type="match status" value="1"/>
</dbReference>
<dbReference type="Pfam" id="PF08264">
    <property type="entry name" value="Anticodon_1"/>
    <property type="match status" value="1"/>
</dbReference>
<dbReference type="Pfam" id="PF00133">
    <property type="entry name" value="tRNA-synt_1"/>
    <property type="match status" value="1"/>
</dbReference>
<dbReference type="Pfam" id="PF13603">
    <property type="entry name" value="tRNA-synt_1_2"/>
    <property type="match status" value="1"/>
</dbReference>
<dbReference type="Pfam" id="PF09334">
    <property type="entry name" value="tRNA-synt_1g"/>
    <property type="match status" value="1"/>
</dbReference>
<dbReference type="PRINTS" id="PR00985">
    <property type="entry name" value="TRNASYNTHLEU"/>
</dbReference>
<dbReference type="SUPFAM" id="SSF47323">
    <property type="entry name" value="Anticodon-binding domain of a subclass of class I aminoacyl-tRNA synthetases"/>
    <property type="match status" value="1"/>
</dbReference>
<dbReference type="SUPFAM" id="SSF52374">
    <property type="entry name" value="Nucleotidylyl transferase"/>
    <property type="match status" value="1"/>
</dbReference>
<dbReference type="SUPFAM" id="SSF50677">
    <property type="entry name" value="ValRS/IleRS/LeuRS editing domain"/>
    <property type="match status" value="1"/>
</dbReference>
<dbReference type="PROSITE" id="PS00178">
    <property type="entry name" value="AA_TRNA_LIGASE_I"/>
    <property type="match status" value="1"/>
</dbReference>
<reference key="1">
    <citation type="submission" date="2007-10" db="EMBL/GenBank/DDBJ databases">
        <title>Complete sequence of chromosome of Desulforudis audaxviator MP104C.</title>
        <authorList>
            <person name="Copeland A."/>
            <person name="Lucas S."/>
            <person name="Lapidus A."/>
            <person name="Barry K."/>
            <person name="Glavina del Rio T."/>
            <person name="Dalin E."/>
            <person name="Tice H."/>
            <person name="Bruce D."/>
            <person name="Pitluck S."/>
            <person name="Lowry S.R."/>
            <person name="Larimer F."/>
            <person name="Land M.L."/>
            <person name="Hauser L."/>
            <person name="Kyrpides N."/>
            <person name="Ivanova N.N."/>
            <person name="Richardson P."/>
        </authorList>
    </citation>
    <scope>NUCLEOTIDE SEQUENCE [LARGE SCALE GENOMIC DNA]</scope>
    <source>
        <strain>MP104C</strain>
    </source>
</reference>
<keyword id="KW-0030">Aminoacyl-tRNA synthetase</keyword>
<keyword id="KW-0067">ATP-binding</keyword>
<keyword id="KW-0963">Cytoplasm</keyword>
<keyword id="KW-0436">Ligase</keyword>
<keyword id="KW-0547">Nucleotide-binding</keyword>
<keyword id="KW-0648">Protein biosynthesis</keyword>
<keyword id="KW-1185">Reference proteome</keyword>
<accession>B1I5R7</accession>
<sequence>MEEKYVFAEIEEKLRRRWETEGIYHVPDFSNRPKYYCLEMFPYPSGNLHMGHVRNYAIGDVVARFKTMRGYDVLHPMGWDAFGLPAENAAIQHGVPPARWTWDNINVMRTQLKLLGVSYDWRRELATCHPGYYRWTQWLFLQFYHRGLAYKAKAPVNWCPSCATVLANEQVVAGGCERCKTAVERRELEQWFFRITAYADRLLKDLAKLPGWPEKVKVMQENWIGRSTGAEIAFPLAGTDEAIRVFTTRPDTLGGVTYMTIAPEHPLVSRVTTPEHRAAVEAFTERARSLSELDRTAGEHEKEGLFTGAYCVNPLTGEQVPVFVANYVLMEYGTGCVMGVPAHDQRDFEFARKYGLPVRVVIQPEGDLLDGDTMSQAYTGPGRLVNTPGFDRMANAEAIPAITRYLEARGAARFQVQYRLRDWLISRQRYWGAPIPIVYCEGCGVVPVPEEGLPVLLPEDVAFKPTGRSPLTESPDFVNTTCPTCGGPARRETDTMDTFMCSSWYYFRFTSPREENGPWGLERVDRWLPVDQYIGGVEHAILHLMYSRFFTKVLYDMGLVKVQEPFTNLLTQGMVLKDGAKMSKSKGNVVSPEDILNRYGADTTRLFVLFAAPPERDLEWSDQGVEGCYRFLQRVWRLVNSVADEIRGAAPVPSANLVGVNRSMRRLTHQTIKKVTEDIETRFNFNTAISAAMELVNGMYHFRDRVAPVNRDPAVMREAVERLLLLLAPFAPFLADELWARTGHPESIHREPWPEYDPELLVEDQVEIVVQINGRVRDRLMVAADIAPEAMRDTVLEQPRVQALVAGKEIVKVVPVPGKLVNIVVR</sequence>
<protein>
    <recommendedName>
        <fullName evidence="1">Leucine--tRNA ligase</fullName>
        <ecNumber evidence="1">6.1.1.4</ecNumber>
    </recommendedName>
    <alternativeName>
        <fullName evidence="1">Leucyl-tRNA synthetase</fullName>
        <shortName evidence="1">LeuRS</shortName>
    </alternativeName>
</protein>
<organism>
    <name type="scientific">Desulforudis audaxviator (strain MP104C)</name>
    <dbReference type="NCBI Taxonomy" id="477974"/>
    <lineage>
        <taxon>Bacteria</taxon>
        <taxon>Bacillati</taxon>
        <taxon>Bacillota</taxon>
        <taxon>Clostridia</taxon>
        <taxon>Thermoanaerobacterales</taxon>
        <taxon>Candidatus Desulforudaceae</taxon>
        <taxon>Candidatus Desulforudis</taxon>
    </lineage>
</organism>
<gene>
    <name evidence="1" type="primary">leuS</name>
    <name type="ordered locus">Daud_1865</name>
</gene>
<proteinExistence type="inferred from homology"/>
<comment type="catalytic activity">
    <reaction evidence="1">
        <text>tRNA(Leu) + L-leucine + ATP = L-leucyl-tRNA(Leu) + AMP + diphosphate</text>
        <dbReference type="Rhea" id="RHEA:11688"/>
        <dbReference type="Rhea" id="RHEA-COMP:9613"/>
        <dbReference type="Rhea" id="RHEA-COMP:9622"/>
        <dbReference type="ChEBI" id="CHEBI:30616"/>
        <dbReference type="ChEBI" id="CHEBI:33019"/>
        <dbReference type="ChEBI" id="CHEBI:57427"/>
        <dbReference type="ChEBI" id="CHEBI:78442"/>
        <dbReference type="ChEBI" id="CHEBI:78494"/>
        <dbReference type="ChEBI" id="CHEBI:456215"/>
        <dbReference type="EC" id="6.1.1.4"/>
    </reaction>
</comment>
<comment type="subcellular location">
    <subcellularLocation>
        <location evidence="1">Cytoplasm</location>
    </subcellularLocation>
</comment>
<comment type="similarity">
    <text evidence="1">Belongs to the class-I aminoacyl-tRNA synthetase family.</text>
</comment>
<feature type="chain" id="PRO_1000091313" description="Leucine--tRNA ligase">
    <location>
        <begin position="1"/>
        <end position="826"/>
    </location>
</feature>
<feature type="short sequence motif" description="'HIGH' region">
    <location>
        <begin position="42"/>
        <end position="52"/>
    </location>
</feature>
<feature type="short sequence motif" description="'KMSKS' region">
    <location>
        <begin position="581"/>
        <end position="585"/>
    </location>
</feature>
<feature type="binding site" evidence="1">
    <location>
        <position position="584"/>
    </location>
    <ligand>
        <name>ATP</name>
        <dbReference type="ChEBI" id="CHEBI:30616"/>
    </ligand>
</feature>
<evidence type="ECO:0000255" key="1">
    <source>
        <dbReference type="HAMAP-Rule" id="MF_00049"/>
    </source>
</evidence>
<name>SYL_DESAP</name>